<sequence length="89" mass="9829">MANHYSALKRARQTETRTARNRANTSRMRTQLRALRTAIAGGDAAQVKTEFSGTVSLLDKAVQKGVLHKNTASRYKARLSARVKAKTSK</sequence>
<name>RS20_KORVE</name>
<gene>
    <name evidence="1" type="primary">rpsT</name>
    <name type="ordered locus">Acid345_3546</name>
</gene>
<reference key="1">
    <citation type="journal article" date="2009" name="Appl. Environ. Microbiol.">
        <title>Three genomes from the phylum Acidobacteria provide insight into the lifestyles of these microorganisms in soils.</title>
        <authorList>
            <person name="Ward N.L."/>
            <person name="Challacombe J.F."/>
            <person name="Janssen P.H."/>
            <person name="Henrissat B."/>
            <person name="Coutinho P.M."/>
            <person name="Wu M."/>
            <person name="Xie G."/>
            <person name="Haft D.H."/>
            <person name="Sait M."/>
            <person name="Badger J."/>
            <person name="Barabote R.D."/>
            <person name="Bradley B."/>
            <person name="Brettin T.S."/>
            <person name="Brinkac L.M."/>
            <person name="Bruce D."/>
            <person name="Creasy T."/>
            <person name="Daugherty S.C."/>
            <person name="Davidsen T.M."/>
            <person name="DeBoy R.T."/>
            <person name="Detter J.C."/>
            <person name="Dodson R.J."/>
            <person name="Durkin A.S."/>
            <person name="Ganapathy A."/>
            <person name="Gwinn-Giglio M."/>
            <person name="Han C.S."/>
            <person name="Khouri H."/>
            <person name="Kiss H."/>
            <person name="Kothari S.P."/>
            <person name="Madupu R."/>
            <person name="Nelson K.E."/>
            <person name="Nelson W.C."/>
            <person name="Paulsen I."/>
            <person name="Penn K."/>
            <person name="Ren Q."/>
            <person name="Rosovitz M.J."/>
            <person name="Selengut J.D."/>
            <person name="Shrivastava S."/>
            <person name="Sullivan S.A."/>
            <person name="Tapia R."/>
            <person name="Thompson L.S."/>
            <person name="Watkins K.L."/>
            <person name="Yang Q."/>
            <person name="Yu C."/>
            <person name="Zafar N."/>
            <person name="Zhou L."/>
            <person name="Kuske C.R."/>
        </authorList>
    </citation>
    <scope>NUCLEOTIDE SEQUENCE [LARGE SCALE GENOMIC DNA]</scope>
    <source>
        <strain>Ellin345</strain>
    </source>
</reference>
<keyword id="KW-1185">Reference proteome</keyword>
<keyword id="KW-0687">Ribonucleoprotein</keyword>
<keyword id="KW-0689">Ribosomal protein</keyword>
<keyword id="KW-0694">RNA-binding</keyword>
<keyword id="KW-0699">rRNA-binding</keyword>
<proteinExistence type="inferred from homology"/>
<feature type="chain" id="PRO_0000260104" description="Small ribosomal subunit protein bS20">
    <location>
        <begin position="1"/>
        <end position="89"/>
    </location>
</feature>
<feature type="region of interest" description="Disordered" evidence="2">
    <location>
        <begin position="1"/>
        <end position="28"/>
    </location>
</feature>
<accession>Q1IKQ3</accession>
<organism>
    <name type="scientific">Koribacter versatilis (strain Ellin345)</name>
    <dbReference type="NCBI Taxonomy" id="204669"/>
    <lineage>
        <taxon>Bacteria</taxon>
        <taxon>Pseudomonadati</taxon>
        <taxon>Acidobacteriota</taxon>
        <taxon>Terriglobia</taxon>
        <taxon>Terriglobales</taxon>
        <taxon>Candidatus Korobacteraceae</taxon>
        <taxon>Candidatus Korobacter</taxon>
    </lineage>
</organism>
<dbReference type="EMBL" id="CP000360">
    <property type="protein sequence ID" value="ABF42547.1"/>
    <property type="molecule type" value="Genomic_DNA"/>
</dbReference>
<dbReference type="RefSeq" id="WP_011524346.1">
    <property type="nucleotide sequence ID" value="NC_008009.1"/>
</dbReference>
<dbReference type="SMR" id="Q1IKQ3"/>
<dbReference type="STRING" id="204669.Acid345_3546"/>
<dbReference type="EnsemblBacteria" id="ABF42547">
    <property type="protein sequence ID" value="ABF42547"/>
    <property type="gene ID" value="Acid345_3546"/>
</dbReference>
<dbReference type="KEGG" id="aba:Acid345_3546"/>
<dbReference type="eggNOG" id="COG0268">
    <property type="taxonomic scope" value="Bacteria"/>
</dbReference>
<dbReference type="HOGENOM" id="CLU_160655_3_1_0"/>
<dbReference type="OrthoDB" id="9808392at2"/>
<dbReference type="Proteomes" id="UP000002432">
    <property type="component" value="Chromosome"/>
</dbReference>
<dbReference type="GO" id="GO:0005829">
    <property type="term" value="C:cytosol"/>
    <property type="evidence" value="ECO:0007669"/>
    <property type="project" value="TreeGrafter"/>
</dbReference>
<dbReference type="GO" id="GO:0015935">
    <property type="term" value="C:small ribosomal subunit"/>
    <property type="evidence" value="ECO:0007669"/>
    <property type="project" value="TreeGrafter"/>
</dbReference>
<dbReference type="GO" id="GO:0070181">
    <property type="term" value="F:small ribosomal subunit rRNA binding"/>
    <property type="evidence" value="ECO:0007669"/>
    <property type="project" value="TreeGrafter"/>
</dbReference>
<dbReference type="GO" id="GO:0003735">
    <property type="term" value="F:structural constituent of ribosome"/>
    <property type="evidence" value="ECO:0007669"/>
    <property type="project" value="InterPro"/>
</dbReference>
<dbReference type="GO" id="GO:0006412">
    <property type="term" value="P:translation"/>
    <property type="evidence" value="ECO:0007669"/>
    <property type="project" value="UniProtKB-UniRule"/>
</dbReference>
<dbReference type="FunFam" id="1.20.58.110:FF:000001">
    <property type="entry name" value="30S ribosomal protein S20"/>
    <property type="match status" value="1"/>
</dbReference>
<dbReference type="Gene3D" id="1.20.58.110">
    <property type="entry name" value="Ribosomal protein S20"/>
    <property type="match status" value="1"/>
</dbReference>
<dbReference type="HAMAP" id="MF_00500">
    <property type="entry name" value="Ribosomal_bS20"/>
    <property type="match status" value="1"/>
</dbReference>
<dbReference type="InterPro" id="IPR002583">
    <property type="entry name" value="Ribosomal_bS20"/>
</dbReference>
<dbReference type="InterPro" id="IPR036510">
    <property type="entry name" value="Ribosomal_bS20_sf"/>
</dbReference>
<dbReference type="NCBIfam" id="TIGR00029">
    <property type="entry name" value="S20"/>
    <property type="match status" value="1"/>
</dbReference>
<dbReference type="PANTHER" id="PTHR33398">
    <property type="entry name" value="30S RIBOSOMAL PROTEIN S20"/>
    <property type="match status" value="1"/>
</dbReference>
<dbReference type="PANTHER" id="PTHR33398:SF1">
    <property type="entry name" value="SMALL RIBOSOMAL SUBUNIT PROTEIN BS20C"/>
    <property type="match status" value="1"/>
</dbReference>
<dbReference type="Pfam" id="PF01649">
    <property type="entry name" value="Ribosomal_S20p"/>
    <property type="match status" value="1"/>
</dbReference>
<dbReference type="SUPFAM" id="SSF46992">
    <property type="entry name" value="Ribosomal protein S20"/>
    <property type="match status" value="1"/>
</dbReference>
<comment type="function">
    <text evidence="1">Binds directly to 16S ribosomal RNA.</text>
</comment>
<comment type="similarity">
    <text evidence="1">Belongs to the bacterial ribosomal protein bS20 family.</text>
</comment>
<evidence type="ECO:0000255" key="1">
    <source>
        <dbReference type="HAMAP-Rule" id="MF_00500"/>
    </source>
</evidence>
<evidence type="ECO:0000256" key="2">
    <source>
        <dbReference type="SAM" id="MobiDB-lite"/>
    </source>
</evidence>
<evidence type="ECO:0000305" key="3"/>
<protein>
    <recommendedName>
        <fullName evidence="1">Small ribosomal subunit protein bS20</fullName>
    </recommendedName>
    <alternativeName>
        <fullName evidence="3">30S ribosomal protein S20</fullName>
    </alternativeName>
</protein>